<feature type="chain" id="PRO_0000248627" description="Uncharacterized protein R758">
    <location>
        <begin position="1"/>
        <end position="183"/>
    </location>
</feature>
<reference key="1">
    <citation type="journal article" date="2004" name="Science">
        <title>The 1.2-megabase genome sequence of Mimivirus.</title>
        <authorList>
            <person name="Raoult D."/>
            <person name="Audic S."/>
            <person name="Robert C."/>
            <person name="Abergel C."/>
            <person name="Renesto P."/>
            <person name="Ogata H."/>
            <person name="La Scola B."/>
            <person name="Susan M."/>
            <person name="Claverie J.-M."/>
        </authorList>
    </citation>
    <scope>NUCLEOTIDE SEQUENCE [LARGE SCALE GENOMIC DNA]</scope>
    <source>
        <strain>Rowbotham-Bradford</strain>
    </source>
</reference>
<keyword id="KW-1185">Reference proteome</keyword>
<protein>
    <recommendedName>
        <fullName>Uncharacterized protein R758</fullName>
    </recommendedName>
</protein>
<organismHost>
    <name type="scientific">Acanthamoeba polyphaga</name>
    <name type="common">Amoeba</name>
    <dbReference type="NCBI Taxonomy" id="5757"/>
</organismHost>
<name>YR758_MIMIV</name>
<gene>
    <name type="ordered locus">MIMI_R758</name>
</gene>
<organism>
    <name type="scientific">Acanthamoeba polyphaga mimivirus</name>
    <name type="common">APMV</name>
    <dbReference type="NCBI Taxonomy" id="212035"/>
    <lineage>
        <taxon>Viruses</taxon>
        <taxon>Varidnaviria</taxon>
        <taxon>Bamfordvirae</taxon>
        <taxon>Nucleocytoviricota</taxon>
        <taxon>Megaviricetes</taxon>
        <taxon>Imitervirales</taxon>
        <taxon>Mimiviridae</taxon>
        <taxon>Megamimivirinae</taxon>
        <taxon>Mimivirus</taxon>
        <taxon>Mimivirus bradfordmassiliense</taxon>
    </lineage>
</organism>
<accession>Q5UPP9</accession>
<dbReference type="EMBL" id="AY653733">
    <property type="protein sequence ID" value="AAV51018.1"/>
    <property type="molecule type" value="Genomic_DNA"/>
</dbReference>
<dbReference type="SMR" id="Q5UPP9"/>
<dbReference type="KEGG" id="vg:9925416"/>
<dbReference type="OrthoDB" id="10493at10239"/>
<dbReference type="Proteomes" id="UP000001134">
    <property type="component" value="Genome"/>
</dbReference>
<dbReference type="GO" id="GO:0008253">
    <property type="term" value="F:5'-nucleotidase activity"/>
    <property type="evidence" value="ECO:0007669"/>
    <property type="project" value="InterPro"/>
</dbReference>
<dbReference type="GO" id="GO:0009223">
    <property type="term" value="P:pyrimidine deoxyribonucleotide catabolic process"/>
    <property type="evidence" value="ECO:0007669"/>
    <property type="project" value="TreeGrafter"/>
</dbReference>
<dbReference type="Gene3D" id="3.40.50.1000">
    <property type="entry name" value="HAD superfamily/HAD-like"/>
    <property type="match status" value="1"/>
</dbReference>
<dbReference type="InterPro" id="IPR010708">
    <property type="entry name" value="5'(3')-deoxyribonucleotidase"/>
</dbReference>
<dbReference type="InterPro" id="IPR036412">
    <property type="entry name" value="HAD-like_sf"/>
</dbReference>
<dbReference type="InterPro" id="IPR023214">
    <property type="entry name" value="HAD_sf"/>
</dbReference>
<dbReference type="PANTHER" id="PTHR16504">
    <property type="entry name" value="5'(3')-DEOXYRIBONUCLEOTIDASE"/>
    <property type="match status" value="1"/>
</dbReference>
<dbReference type="PANTHER" id="PTHR16504:SF4">
    <property type="entry name" value="5'(3')-DEOXYRIBONUCLEOTIDASE"/>
    <property type="match status" value="1"/>
</dbReference>
<dbReference type="Pfam" id="PF06941">
    <property type="entry name" value="NT5C"/>
    <property type="match status" value="1"/>
</dbReference>
<dbReference type="SUPFAM" id="SSF56784">
    <property type="entry name" value="HAD-like"/>
    <property type="match status" value="1"/>
</dbReference>
<proteinExistence type="predicted"/>
<sequence length="183" mass="21353">MKLSFDSIVTKEPIRLAIIMENVIFDTRDEYGELHSESTMRKKYHEDLKPIPGAIEAFKNLNSITDLRNRKIFDVNIISTLSLTNQKSYINKIANVQKWFGDEALKKLIFCQDKSSIRTDILIDNSFKPQNFPDTNKFTLNTPYLQIRYGTDETNFYQIKSWTDNDYLDVIKKICIDLGLLVI</sequence>